<reference key="1">
    <citation type="journal article" date="2005" name="Science">
        <title>The transcriptional landscape of the mammalian genome.</title>
        <authorList>
            <person name="Carninci P."/>
            <person name="Kasukawa T."/>
            <person name="Katayama S."/>
            <person name="Gough J."/>
            <person name="Frith M.C."/>
            <person name="Maeda N."/>
            <person name="Oyama R."/>
            <person name="Ravasi T."/>
            <person name="Lenhard B."/>
            <person name="Wells C."/>
            <person name="Kodzius R."/>
            <person name="Shimokawa K."/>
            <person name="Bajic V.B."/>
            <person name="Brenner S.E."/>
            <person name="Batalov S."/>
            <person name="Forrest A.R."/>
            <person name="Zavolan M."/>
            <person name="Davis M.J."/>
            <person name="Wilming L.G."/>
            <person name="Aidinis V."/>
            <person name="Allen J.E."/>
            <person name="Ambesi-Impiombato A."/>
            <person name="Apweiler R."/>
            <person name="Aturaliya R.N."/>
            <person name="Bailey T.L."/>
            <person name="Bansal M."/>
            <person name="Baxter L."/>
            <person name="Beisel K.W."/>
            <person name="Bersano T."/>
            <person name="Bono H."/>
            <person name="Chalk A.M."/>
            <person name="Chiu K.P."/>
            <person name="Choudhary V."/>
            <person name="Christoffels A."/>
            <person name="Clutterbuck D.R."/>
            <person name="Crowe M.L."/>
            <person name="Dalla E."/>
            <person name="Dalrymple B.P."/>
            <person name="de Bono B."/>
            <person name="Della Gatta G."/>
            <person name="di Bernardo D."/>
            <person name="Down T."/>
            <person name="Engstrom P."/>
            <person name="Fagiolini M."/>
            <person name="Faulkner G."/>
            <person name="Fletcher C.F."/>
            <person name="Fukushima T."/>
            <person name="Furuno M."/>
            <person name="Futaki S."/>
            <person name="Gariboldi M."/>
            <person name="Georgii-Hemming P."/>
            <person name="Gingeras T.R."/>
            <person name="Gojobori T."/>
            <person name="Green R.E."/>
            <person name="Gustincich S."/>
            <person name="Harbers M."/>
            <person name="Hayashi Y."/>
            <person name="Hensch T.K."/>
            <person name="Hirokawa N."/>
            <person name="Hill D."/>
            <person name="Huminiecki L."/>
            <person name="Iacono M."/>
            <person name="Ikeo K."/>
            <person name="Iwama A."/>
            <person name="Ishikawa T."/>
            <person name="Jakt M."/>
            <person name="Kanapin A."/>
            <person name="Katoh M."/>
            <person name="Kawasawa Y."/>
            <person name="Kelso J."/>
            <person name="Kitamura H."/>
            <person name="Kitano H."/>
            <person name="Kollias G."/>
            <person name="Krishnan S.P."/>
            <person name="Kruger A."/>
            <person name="Kummerfeld S.K."/>
            <person name="Kurochkin I.V."/>
            <person name="Lareau L.F."/>
            <person name="Lazarevic D."/>
            <person name="Lipovich L."/>
            <person name="Liu J."/>
            <person name="Liuni S."/>
            <person name="McWilliam S."/>
            <person name="Madan Babu M."/>
            <person name="Madera M."/>
            <person name="Marchionni L."/>
            <person name="Matsuda H."/>
            <person name="Matsuzawa S."/>
            <person name="Miki H."/>
            <person name="Mignone F."/>
            <person name="Miyake S."/>
            <person name="Morris K."/>
            <person name="Mottagui-Tabar S."/>
            <person name="Mulder N."/>
            <person name="Nakano N."/>
            <person name="Nakauchi H."/>
            <person name="Ng P."/>
            <person name="Nilsson R."/>
            <person name="Nishiguchi S."/>
            <person name="Nishikawa S."/>
            <person name="Nori F."/>
            <person name="Ohara O."/>
            <person name="Okazaki Y."/>
            <person name="Orlando V."/>
            <person name="Pang K.C."/>
            <person name="Pavan W.J."/>
            <person name="Pavesi G."/>
            <person name="Pesole G."/>
            <person name="Petrovsky N."/>
            <person name="Piazza S."/>
            <person name="Reed J."/>
            <person name="Reid J.F."/>
            <person name="Ring B.Z."/>
            <person name="Ringwald M."/>
            <person name="Rost B."/>
            <person name="Ruan Y."/>
            <person name="Salzberg S.L."/>
            <person name="Sandelin A."/>
            <person name="Schneider C."/>
            <person name="Schoenbach C."/>
            <person name="Sekiguchi K."/>
            <person name="Semple C.A."/>
            <person name="Seno S."/>
            <person name="Sessa L."/>
            <person name="Sheng Y."/>
            <person name="Shibata Y."/>
            <person name="Shimada H."/>
            <person name="Shimada K."/>
            <person name="Silva D."/>
            <person name="Sinclair B."/>
            <person name="Sperling S."/>
            <person name="Stupka E."/>
            <person name="Sugiura K."/>
            <person name="Sultana R."/>
            <person name="Takenaka Y."/>
            <person name="Taki K."/>
            <person name="Tammoja K."/>
            <person name="Tan S.L."/>
            <person name="Tang S."/>
            <person name="Taylor M.S."/>
            <person name="Tegner J."/>
            <person name="Teichmann S.A."/>
            <person name="Ueda H.R."/>
            <person name="van Nimwegen E."/>
            <person name="Verardo R."/>
            <person name="Wei C.L."/>
            <person name="Yagi K."/>
            <person name="Yamanishi H."/>
            <person name="Zabarovsky E."/>
            <person name="Zhu S."/>
            <person name="Zimmer A."/>
            <person name="Hide W."/>
            <person name="Bult C."/>
            <person name="Grimmond S.M."/>
            <person name="Teasdale R.D."/>
            <person name="Liu E.T."/>
            <person name="Brusic V."/>
            <person name="Quackenbush J."/>
            <person name="Wahlestedt C."/>
            <person name="Mattick J.S."/>
            <person name="Hume D.A."/>
            <person name="Kai C."/>
            <person name="Sasaki D."/>
            <person name="Tomaru Y."/>
            <person name="Fukuda S."/>
            <person name="Kanamori-Katayama M."/>
            <person name="Suzuki M."/>
            <person name="Aoki J."/>
            <person name="Arakawa T."/>
            <person name="Iida J."/>
            <person name="Imamura K."/>
            <person name="Itoh M."/>
            <person name="Kato T."/>
            <person name="Kawaji H."/>
            <person name="Kawagashira N."/>
            <person name="Kawashima T."/>
            <person name="Kojima M."/>
            <person name="Kondo S."/>
            <person name="Konno H."/>
            <person name="Nakano K."/>
            <person name="Ninomiya N."/>
            <person name="Nishio T."/>
            <person name="Okada M."/>
            <person name="Plessy C."/>
            <person name="Shibata K."/>
            <person name="Shiraki T."/>
            <person name="Suzuki S."/>
            <person name="Tagami M."/>
            <person name="Waki K."/>
            <person name="Watahiki A."/>
            <person name="Okamura-Oho Y."/>
            <person name="Suzuki H."/>
            <person name="Kawai J."/>
            <person name="Hayashizaki Y."/>
        </authorList>
    </citation>
    <scope>NUCLEOTIDE SEQUENCE [LARGE SCALE MRNA] (ISOFORM 1)</scope>
    <source>
        <strain>C57BL/6J</strain>
        <tissue>Hippocampus</tissue>
    </source>
</reference>
<reference key="2">
    <citation type="journal article" date="2009" name="PLoS Biol.">
        <title>Lineage-specific biology revealed by a finished genome assembly of the mouse.</title>
        <authorList>
            <person name="Church D.M."/>
            <person name="Goodstadt L."/>
            <person name="Hillier L.W."/>
            <person name="Zody M.C."/>
            <person name="Goldstein S."/>
            <person name="She X."/>
            <person name="Bult C.J."/>
            <person name="Agarwala R."/>
            <person name="Cherry J.L."/>
            <person name="DiCuccio M."/>
            <person name="Hlavina W."/>
            <person name="Kapustin Y."/>
            <person name="Meric P."/>
            <person name="Maglott D."/>
            <person name="Birtle Z."/>
            <person name="Marques A.C."/>
            <person name="Graves T."/>
            <person name="Zhou S."/>
            <person name="Teague B."/>
            <person name="Potamousis K."/>
            <person name="Churas C."/>
            <person name="Place M."/>
            <person name="Herschleb J."/>
            <person name="Runnheim R."/>
            <person name="Forrest D."/>
            <person name="Amos-Landgraf J."/>
            <person name="Schwartz D.C."/>
            <person name="Cheng Z."/>
            <person name="Lindblad-Toh K."/>
            <person name="Eichler E.E."/>
            <person name="Ponting C.P."/>
        </authorList>
    </citation>
    <scope>NUCLEOTIDE SEQUENCE [LARGE SCALE GENOMIC DNA] (ISOFORM 2)</scope>
    <source>
        <strain>C57BL/6J</strain>
    </source>
</reference>
<reference key="3">
    <citation type="journal article" date="2004" name="Genome Res.">
        <title>The status, quality, and expansion of the NIH full-length cDNA project: the Mammalian Gene Collection (MGC).</title>
        <authorList>
            <consortium name="The MGC Project Team"/>
        </authorList>
    </citation>
    <scope>NUCLEOTIDE SEQUENCE [LARGE SCALE MRNA] (ISOFORMS 2 AND 3)</scope>
</reference>
<reference key="4">
    <citation type="journal article" date="2010" name="Cell">
        <title>A tissue-specific atlas of mouse protein phosphorylation and expression.</title>
        <authorList>
            <person name="Huttlin E.L."/>
            <person name="Jedrychowski M.P."/>
            <person name="Elias J.E."/>
            <person name="Goswami T."/>
            <person name="Rad R."/>
            <person name="Beausoleil S.A."/>
            <person name="Villen J."/>
            <person name="Haas W."/>
            <person name="Sowa M.E."/>
            <person name="Gygi S.P."/>
        </authorList>
    </citation>
    <scope>IDENTIFICATION BY MASS SPECTROMETRY [LARGE SCALE ANALYSIS]</scope>
</reference>
<reference key="5">
    <citation type="journal article" date="2014" name="Mol. Cell. Proteomics">
        <title>Immunoaffinity enrichment and mass spectrometry analysis of protein methylation.</title>
        <authorList>
            <person name="Guo A."/>
            <person name="Gu H."/>
            <person name="Zhou J."/>
            <person name="Mulhern D."/>
            <person name="Wang Y."/>
            <person name="Lee K.A."/>
            <person name="Yang V."/>
            <person name="Aguiar M."/>
            <person name="Kornhauser J."/>
            <person name="Jia X."/>
            <person name="Ren J."/>
            <person name="Beausoleil S.A."/>
            <person name="Silva J.C."/>
            <person name="Vemulapalli V."/>
            <person name="Bedford M.T."/>
            <person name="Comb M.J."/>
        </authorList>
    </citation>
    <scope>IDENTIFICATION BY MASS SPECTROMETRY [LARGE SCALE ANALYSIS]</scope>
</reference>
<reference key="6">
    <citation type="journal article" date="2006" name="J. Biol. Chem.">
        <title>Importance of K+-dependent Na+/Ca2+-exchanger 2, NCKX2, in motor learning and memory.</title>
        <authorList>
            <person name="Li X.F."/>
            <person name="Kiedrowski L."/>
            <person name="Tremblay F."/>
            <person name="Fernandez F.R."/>
            <person name="Perizzolo M."/>
            <person name="Winkfein R.J."/>
            <person name="Turner R.W."/>
            <person name="Bains J.S."/>
            <person name="Rancourt D.E."/>
            <person name="Lytton J."/>
        </authorList>
    </citation>
    <scope>FUNCTION</scope>
    <scope>DISRUPTION PHENOTYPE</scope>
</reference>
<organism>
    <name type="scientific">Mus musculus</name>
    <name type="common">Mouse</name>
    <dbReference type="NCBI Taxonomy" id="10090"/>
    <lineage>
        <taxon>Eukaryota</taxon>
        <taxon>Metazoa</taxon>
        <taxon>Chordata</taxon>
        <taxon>Craniata</taxon>
        <taxon>Vertebrata</taxon>
        <taxon>Euteleostomi</taxon>
        <taxon>Mammalia</taxon>
        <taxon>Eutheria</taxon>
        <taxon>Euarchontoglires</taxon>
        <taxon>Glires</taxon>
        <taxon>Rodentia</taxon>
        <taxon>Myomorpha</taxon>
        <taxon>Muroidea</taxon>
        <taxon>Muridae</taxon>
        <taxon>Murinae</taxon>
        <taxon>Mus</taxon>
        <taxon>Mus</taxon>
    </lineage>
</organism>
<comment type="function">
    <text evidence="2 5">Calcium, potassium:sodium antiporter that transports 1 Ca(2+) and 1 K(+) in exchange for 4 Na(+) (By similarity). Required for learming and memory by regulating neuronal Ca(2+), which is essential for the development of synaptic plasticity (PubMed:16407245).</text>
</comment>
<comment type="catalytic activity">
    <reaction evidence="2">
        <text>Ca(2+)(out) + K(+)(out) + 4 Na(+)(in) = Ca(2+)(in) + K(+)(in) + 4 Na(+)(out)</text>
        <dbReference type="Rhea" id="RHEA:69967"/>
        <dbReference type="ChEBI" id="CHEBI:29101"/>
        <dbReference type="ChEBI" id="CHEBI:29103"/>
        <dbReference type="ChEBI" id="CHEBI:29108"/>
    </reaction>
</comment>
<comment type="subcellular location">
    <subcellularLocation>
        <location evidence="2">Cell membrane</location>
        <topology evidence="3">Multi-pass membrane protein</topology>
    </subcellularLocation>
</comment>
<comment type="alternative products">
    <event type="alternative splicing"/>
    <isoform>
        <id>Q8BUN9-1</id>
        <name>1</name>
        <sequence type="displayed"/>
    </isoform>
    <isoform>
        <id>Q8BUN9-2</id>
        <name>2</name>
        <sequence type="described" ref="VSP_061480 VSP_061481"/>
    </isoform>
    <isoform>
        <id>Q8BUN9-3</id>
        <name>3</name>
        <sequence type="described" ref="VSP_061481"/>
    </isoform>
    <isoform>
        <id>Q8BUN9-4</id>
        <name>4</name>
        <sequence type="described" ref="VSP_061481 VSP_061482"/>
    </isoform>
    <isoform>
        <id>Q8BUN9-5</id>
        <name>5</name>
        <sequence type="described" ref="VSP_061482"/>
    </isoform>
</comment>
<comment type="disruption phenotype">
    <text evidence="5">Mice display a significant reduction in Ca(2+) flux in cortical neurons, leading to a profound loss of long term potentiation and an increase in long term depression at hippocampal Schaffer/CA1 synapses, and clear deficits in specific tests of motor learning and spatial working memory (PubMed:16407245). Mice do not show any obvious loss of photoreceptor function in cones (PubMed:16407245).</text>
</comment>
<comment type="similarity">
    <text evidence="6">Belongs to the Ca(2+):cation antiporter (CaCA) (TC 2.A.19) family. SLC24A subfamily.</text>
</comment>
<accession>Q8BUN9</accession>
<accession>B1AXF2</accession>
<accession>B1AXF3</accession>
<accession>Q14AY1</accession>
<accession>Q14BI1</accession>
<protein>
    <recommendedName>
        <fullName>Sodium/potassium/calcium exchanger 2</fullName>
    </recommendedName>
    <alternativeName>
        <fullName>Na(+)/K(+)/Ca(2+)-exchange protein 2</fullName>
    </alternativeName>
    <alternativeName>
        <fullName>Retinal cone Na-Ca+K exchanger</fullName>
    </alternativeName>
    <alternativeName>
        <fullName>Solute carrier family 24 member 2</fullName>
    </alternativeName>
</protein>
<name>NCKX2_MOUSE</name>
<gene>
    <name evidence="7" type="primary">Slc24a2</name>
</gene>
<dbReference type="EMBL" id="AK083127">
    <property type="protein sequence ID" value="BAC38773.1"/>
    <property type="molecule type" value="mRNA"/>
</dbReference>
<dbReference type="EMBL" id="BC115867">
    <property type="protein sequence ID" value="AAI15868.1"/>
    <property type="molecule type" value="mRNA"/>
</dbReference>
<dbReference type="EMBL" id="BC116637">
    <property type="protein sequence ID" value="AAI16638.1"/>
    <property type="molecule type" value="mRNA"/>
</dbReference>
<dbReference type="CCDS" id="CCDS18312.1">
    <molecule id="Q8BUN9-1"/>
</dbReference>
<dbReference type="CCDS" id="CCDS51220.1">
    <molecule id="Q8BUN9-2"/>
</dbReference>
<dbReference type="RefSeq" id="NP_001103710.1">
    <molecule id="Q8BUN9-2"/>
    <property type="nucleotide sequence ID" value="NM_001110240.1"/>
</dbReference>
<dbReference type="RefSeq" id="NP_766014.1">
    <molecule id="Q8BUN9-1"/>
    <property type="nucleotide sequence ID" value="NM_172426.2"/>
</dbReference>
<dbReference type="RefSeq" id="XP_006538409.1">
    <molecule id="Q8BUN9-2"/>
    <property type="nucleotide sequence ID" value="XM_006538346.5"/>
</dbReference>
<dbReference type="RefSeq" id="XP_006538412.1">
    <molecule id="Q8BUN9-3"/>
    <property type="nucleotide sequence ID" value="XM_006538349.4"/>
</dbReference>
<dbReference type="RefSeq" id="XP_030109737.1">
    <molecule id="Q8BUN9-2"/>
    <property type="nucleotide sequence ID" value="XM_030253877.1"/>
</dbReference>
<dbReference type="RefSeq" id="XP_036020418.1">
    <molecule id="Q8BUN9-1"/>
    <property type="nucleotide sequence ID" value="XM_036164525.1"/>
</dbReference>
<dbReference type="RefSeq" id="XP_036020419.1">
    <molecule id="Q8BUN9-3"/>
    <property type="nucleotide sequence ID" value="XM_036164526.1"/>
</dbReference>
<dbReference type="FunCoup" id="Q8BUN9">
    <property type="interactions" value="837"/>
</dbReference>
<dbReference type="STRING" id="10090.ENSMUSP00000102776"/>
<dbReference type="GlyConnect" id="2724">
    <property type="glycosylation" value="1 N-Linked glycan (1 site)"/>
</dbReference>
<dbReference type="GlyCosmos" id="Q8BUN9">
    <property type="glycosylation" value="1 site, No reported glycans"/>
</dbReference>
<dbReference type="GlyGen" id="Q8BUN9">
    <property type="glycosylation" value="1 site, 1 N-linked glycan (1 site)"/>
</dbReference>
<dbReference type="iPTMnet" id="Q8BUN9"/>
<dbReference type="PaxDb" id="10090-ENSMUSP00000102775"/>
<dbReference type="PeptideAtlas" id="Q8BUN9"/>
<dbReference type="ProteomicsDB" id="308299"/>
<dbReference type="ProteomicsDB" id="332554"/>
<dbReference type="ProteomicsDB" id="332692"/>
<dbReference type="ProteomicsDB" id="373403"/>
<dbReference type="Antibodypedia" id="64282">
    <property type="antibodies" value="49 antibodies from 18 providers"/>
</dbReference>
<dbReference type="DNASU" id="76376"/>
<dbReference type="Ensembl" id="ENSMUST00000044990.11">
    <molecule id="Q8BUN9-5"/>
    <property type="protein sequence ID" value="ENSMUSP00000043937.5"/>
    <property type="gene ID" value="ENSMUSG00000037996.18"/>
</dbReference>
<dbReference type="Ensembl" id="ENSMUST00000107155.8">
    <molecule id="Q8BUN9-4"/>
    <property type="protein sequence ID" value="ENSMUSP00000102773.2"/>
    <property type="gene ID" value="ENSMUSG00000037996.18"/>
</dbReference>
<dbReference type="Ensembl" id="ENSMUST00000107157.9">
    <molecule id="Q8BUN9-1"/>
    <property type="protein sequence ID" value="ENSMUSP00000102775.3"/>
    <property type="gene ID" value="ENSMUSG00000037996.18"/>
</dbReference>
<dbReference type="Ensembl" id="ENSMUST00000107158.9">
    <molecule id="Q8BUN9-2"/>
    <property type="protein sequence ID" value="ENSMUSP00000102776.3"/>
    <property type="gene ID" value="ENSMUSG00000037996.18"/>
</dbReference>
<dbReference type="GeneID" id="76376"/>
<dbReference type="KEGG" id="mmu:76376"/>
<dbReference type="UCSC" id="uc008tmk.1">
    <molecule id="Q8BUN9-1"/>
    <property type="organism name" value="mouse"/>
</dbReference>
<dbReference type="AGR" id="MGI:1923626"/>
<dbReference type="CTD" id="25769"/>
<dbReference type="MGI" id="MGI:1923626">
    <property type="gene designation" value="Slc24a2"/>
</dbReference>
<dbReference type="VEuPathDB" id="HostDB:ENSMUSG00000037996"/>
<dbReference type="eggNOG" id="KOG1307">
    <property type="taxonomic scope" value="Eukaryota"/>
</dbReference>
<dbReference type="GeneTree" id="ENSGT01030000234532"/>
<dbReference type="HOGENOM" id="CLU_007948_5_1_1"/>
<dbReference type="OMA" id="NGIMQLM"/>
<dbReference type="PhylomeDB" id="Q8BUN9"/>
<dbReference type="TreeFam" id="TF318759"/>
<dbReference type="Reactome" id="R-MMU-425561">
    <property type="pathway name" value="Sodium/Calcium exchangers"/>
</dbReference>
<dbReference type="BioGRID-ORCS" id="76376">
    <property type="hits" value="2 hits in 79 CRISPR screens"/>
</dbReference>
<dbReference type="ChiTaRS" id="Slc24a2">
    <property type="organism name" value="mouse"/>
</dbReference>
<dbReference type="PRO" id="PR:Q8BUN9"/>
<dbReference type="Proteomes" id="UP000000589">
    <property type="component" value="Chromosome 4"/>
</dbReference>
<dbReference type="Bgee" id="ENSMUSG00000037996">
    <property type="expression patterns" value="Expressed in lateral geniculate body and 87 other cell types or tissues"/>
</dbReference>
<dbReference type="ExpressionAtlas" id="Q8BUN9">
    <property type="expression patterns" value="baseline and differential"/>
</dbReference>
<dbReference type="GO" id="GO:0016020">
    <property type="term" value="C:membrane"/>
    <property type="evidence" value="ECO:0000314"/>
    <property type="project" value="MGI"/>
</dbReference>
<dbReference type="GO" id="GO:0005886">
    <property type="term" value="C:plasma membrane"/>
    <property type="evidence" value="ECO:0007669"/>
    <property type="project" value="UniProtKB-SubCell"/>
</dbReference>
<dbReference type="GO" id="GO:0098794">
    <property type="term" value="C:postsynapse"/>
    <property type="evidence" value="ECO:0000314"/>
    <property type="project" value="SynGO"/>
</dbReference>
<dbReference type="GO" id="GO:0098793">
    <property type="term" value="C:presynapse"/>
    <property type="evidence" value="ECO:0000314"/>
    <property type="project" value="SynGO"/>
</dbReference>
<dbReference type="GO" id="GO:0005262">
    <property type="term" value="F:calcium channel activity"/>
    <property type="evidence" value="ECO:0000314"/>
    <property type="project" value="MGI"/>
</dbReference>
<dbReference type="GO" id="GO:0008273">
    <property type="term" value="F:calcium, potassium:sodium antiporter activity"/>
    <property type="evidence" value="ECO:0000266"/>
    <property type="project" value="MGI"/>
</dbReference>
<dbReference type="GO" id="GO:0015293">
    <property type="term" value="F:symporter activity"/>
    <property type="evidence" value="ECO:0007669"/>
    <property type="project" value="UniProtKB-KW"/>
</dbReference>
<dbReference type="GO" id="GO:0098703">
    <property type="term" value="P:calcium ion import across plasma membrane"/>
    <property type="evidence" value="ECO:0007669"/>
    <property type="project" value="Ensembl"/>
</dbReference>
<dbReference type="GO" id="GO:0006816">
    <property type="term" value="P:calcium ion transport"/>
    <property type="evidence" value="ECO:0000314"/>
    <property type="project" value="MGI"/>
</dbReference>
<dbReference type="GO" id="GO:0071486">
    <property type="term" value="P:cellular response to high light intensity"/>
    <property type="evidence" value="ECO:0000315"/>
    <property type="project" value="ARUK-UCL"/>
</dbReference>
<dbReference type="GO" id="GO:0036368">
    <property type="term" value="P:cone photoresponse recovery"/>
    <property type="evidence" value="ECO:0000315"/>
    <property type="project" value="ARUK-UCL"/>
</dbReference>
<dbReference type="GO" id="GO:0051649">
    <property type="term" value="P:establishment of localization in cell"/>
    <property type="evidence" value="ECO:0000314"/>
    <property type="project" value="MGI"/>
</dbReference>
<dbReference type="GO" id="GO:0006874">
    <property type="term" value="P:intracellular calcium ion homeostasis"/>
    <property type="evidence" value="ECO:0000315"/>
    <property type="project" value="MGI"/>
</dbReference>
<dbReference type="GO" id="GO:0007612">
    <property type="term" value="P:learning"/>
    <property type="evidence" value="ECO:0000315"/>
    <property type="project" value="MGI"/>
</dbReference>
<dbReference type="GO" id="GO:0060292">
    <property type="term" value="P:long-term synaptic depression"/>
    <property type="evidence" value="ECO:0000315"/>
    <property type="project" value="MGI"/>
</dbReference>
<dbReference type="GO" id="GO:0060291">
    <property type="term" value="P:long-term synaptic potentiation"/>
    <property type="evidence" value="ECO:0000315"/>
    <property type="project" value="MGI"/>
</dbReference>
<dbReference type="GO" id="GO:0007613">
    <property type="term" value="P:memory"/>
    <property type="evidence" value="ECO:0000315"/>
    <property type="project" value="MGI"/>
</dbReference>
<dbReference type="GO" id="GO:0034220">
    <property type="term" value="P:monoatomic ion transmembrane transport"/>
    <property type="evidence" value="ECO:0000266"/>
    <property type="project" value="MGI"/>
</dbReference>
<dbReference type="GO" id="GO:0070050">
    <property type="term" value="P:neuron cellular homeostasis"/>
    <property type="evidence" value="ECO:0000315"/>
    <property type="project" value="MGI"/>
</dbReference>
<dbReference type="GO" id="GO:0007602">
    <property type="term" value="P:phototransduction"/>
    <property type="evidence" value="ECO:0000315"/>
    <property type="project" value="ARUK-UCL"/>
</dbReference>
<dbReference type="FunFam" id="1.20.1420.30:FF:000002">
    <property type="entry name" value="Sodium/potassium/calcium exchanger 2 isoform 1"/>
    <property type="match status" value="1"/>
</dbReference>
<dbReference type="FunFam" id="1.20.1420.30:FF:000004">
    <property type="entry name" value="Sodium/potassium/calcium exchanger 2 isoform 1"/>
    <property type="match status" value="1"/>
</dbReference>
<dbReference type="Gene3D" id="1.20.1420.30">
    <property type="entry name" value="NCX, central ion-binding region"/>
    <property type="match status" value="2"/>
</dbReference>
<dbReference type="InterPro" id="IPR004481">
    <property type="entry name" value="K/Na/Ca-exchanger"/>
</dbReference>
<dbReference type="InterPro" id="IPR004837">
    <property type="entry name" value="NaCa_Exmemb"/>
</dbReference>
<dbReference type="InterPro" id="IPR044880">
    <property type="entry name" value="NCX_ion-bd_dom_sf"/>
</dbReference>
<dbReference type="NCBIfam" id="TIGR00367">
    <property type="entry name" value="calcium/sodium antiporter"/>
    <property type="match status" value="1"/>
</dbReference>
<dbReference type="PANTHER" id="PTHR10846">
    <property type="entry name" value="SODIUM/POTASSIUM/CALCIUM EXCHANGER"/>
    <property type="match status" value="1"/>
</dbReference>
<dbReference type="PANTHER" id="PTHR10846:SF41">
    <property type="entry name" value="SODIUM_POTASSIUM_CALCIUM EXCHANGER 2"/>
    <property type="match status" value="1"/>
</dbReference>
<dbReference type="Pfam" id="PF01699">
    <property type="entry name" value="Na_Ca_ex"/>
    <property type="match status" value="2"/>
</dbReference>
<keyword id="KW-0025">Alternative splicing</keyword>
<keyword id="KW-0050">Antiport</keyword>
<keyword id="KW-0106">Calcium</keyword>
<keyword id="KW-0109">Calcium transport</keyword>
<keyword id="KW-1003">Cell membrane</keyword>
<keyword id="KW-0325">Glycoprotein</keyword>
<keyword id="KW-0406">Ion transport</keyword>
<keyword id="KW-0472">Membrane</keyword>
<keyword id="KW-0597">Phosphoprotein</keyword>
<keyword id="KW-0630">Potassium</keyword>
<keyword id="KW-0633">Potassium transport</keyword>
<keyword id="KW-1185">Reference proteome</keyword>
<keyword id="KW-0677">Repeat</keyword>
<keyword id="KW-0915">Sodium</keyword>
<keyword id="KW-0739">Sodium transport</keyword>
<keyword id="KW-0769">Symport</keyword>
<keyword id="KW-0812">Transmembrane</keyword>
<keyword id="KW-1133">Transmembrane helix</keyword>
<keyword id="KW-0813">Transport</keyword>
<sequence>MDLHQSPTARLLQKWCSHESPFGCRRHYNSRKKLKLIRVIGLVMGLVAVSTVPFSISAFTETDSQSNRGEASDMSGPRVAQGHRQRTLLDLNDKIRDYTPQPPASQEDQAENSTEHTQGDYPKDIFSLEERRKGAIILHVIGMIYMFIALAIVCDEFFVPSLTVITEKLGISDDVAGATFMAAGGSAPELFTSLIGVFIAHSNVGIGTIVGSAVFNILFVIGMCALFSREILNLTWWPLFRDVSFYIVDLLMLITFFLDNVIMWWESLLLLTAYFAYVVFMKFNVQVERWVKQMISRNNVIKVTVPEAQAKSPTAGDKDGPTLPSKPRLQRGGSSASLHNSLMRNSIFQLMIHTLDPLAEELGSYGKLKYYDTMTEEGRFREKASILHKIAKKKCQVDENERQNGAANHVEKIELPNSTSTEVEMTPSSEASEPVQNGNLSHNIEAADAPKATETAEEEDDQPLSLSWPTNTRKQATFLIVFPIVFPLWITLPDVRKPASRKFFPITFFGSITWIAVFSYLMVWWAHQVGETIGISEEIMGLTILAAGTSIPDLITSVIVARKGLGDMAVSSSVGSNIFDITVGLPLPWLLYTIIHRFSPVTVSSNGLFCAIVLLFIMLLFVILSIALCKWRMNKILGFIMFGLYFVFLVVSVLLEDKVLVCPVSI</sequence>
<feature type="chain" id="PRO_0000455294" description="Sodium/potassium/calcium exchanger 2">
    <location>
        <begin position="1"/>
        <end position="666"/>
    </location>
</feature>
<feature type="topological domain" description="Cytoplasmic" evidence="6">
    <location>
        <begin position="1"/>
        <end position="38"/>
    </location>
</feature>
<feature type="transmembrane region" description="Helical" evidence="3">
    <location>
        <begin position="39"/>
        <end position="59"/>
    </location>
</feature>
<feature type="topological domain" description="Extracellular" evidence="6">
    <location>
        <begin position="60"/>
        <end position="133"/>
    </location>
</feature>
<feature type="transmembrane region" description="Helical" evidence="3">
    <location>
        <begin position="134"/>
        <end position="154"/>
    </location>
</feature>
<feature type="topological domain" description="Cytoplasmic" evidence="6">
    <location>
        <begin position="155"/>
        <end position="179"/>
    </location>
</feature>
<feature type="transmembrane region" description="Helical" evidence="3">
    <location>
        <begin position="180"/>
        <end position="200"/>
    </location>
</feature>
<feature type="topological domain" description="Extracellular" evidence="6">
    <location>
        <begin position="201"/>
        <end position="205"/>
    </location>
</feature>
<feature type="transmembrane region" description="Helical" evidence="3">
    <location>
        <begin position="206"/>
        <end position="226"/>
    </location>
</feature>
<feature type="topological domain" description="Cytoplasmic" evidence="6">
    <location>
        <begin position="227"/>
        <end position="237"/>
    </location>
</feature>
<feature type="transmembrane region" description="Helical" evidence="3">
    <location>
        <begin position="238"/>
        <end position="258"/>
    </location>
</feature>
<feature type="topological domain" description="Extracellular" evidence="6">
    <location>
        <begin position="259"/>
        <end position="260"/>
    </location>
</feature>
<feature type="transmembrane region" description="Helical" evidence="3">
    <location>
        <begin position="261"/>
        <end position="281"/>
    </location>
</feature>
<feature type="topological domain" description="Cytoplasmic" evidence="6">
    <location>
        <begin position="282"/>
        <end position="502"/>
    </location>
</feature>
<feature type="transmembrane region" description="Helical" evidence="3">
    <location>
        <begin position="503"/>
        <end position="523"/>
    </location>
</feature>
<feature type="topological domain" description="Extracellular" evidence="6">
    <location>
        <begin position="524"/>
        <end position="538"/>
    </location>
</feature>
<feature type="transmembrane region" description="Helical" evidence="3">
    <location>
        <begin position="539"/>
        <end position="559"/>
    </location>
</feature>
<feature type="topological domain" description="Cytoplasmic" evidence="6">
    <location>
        <begin position="560"/>
        <end position="574"/>
    </location>
</feature>
<feature type="transmembrane region" description="Helical" evidence="3">
    <location>
        <begin position="575"/>
        <end position="595"/>
    </location>
</feature>
<feature type="topological domain" description="Extracellular" evidence="6">
    <location>
        <begin position="596"/>
        <end position="607"/>
    </location>
</feature>
<feature type="transmembrane region" description="Helical" evidence="3">
    <location>
        <begin position="608"/>
        <end position="628"/>
    </location>
</feature>
<feature type="topological domain" description="Cytoplasmic" evidence="6">
    <location>
        <begin position="629"/>
        <end position="635"/>
    </location>
</feature>
<feature type="transmembrane region" description="Helical" evidence="3">
    <location>
        <begin position="636"/>
        <end position="656"/>
    </location>
</feature>
<feature type="topological domain" description="Extracellular" evidence="6">
    <location>
        <begin position="657"/>
        <end position="666"/>
    </location>
</feature>
<feature type="repeat" description="Alpha-1" evidence="6">
    <location>
        <begin position="175"/>
        <end position="215"/>
    </location>
</feature>
<feature type="repeat" description="Alpha-2" evidence="6">
    <location>
        <begin position="546"/>
        <end position="577"/>
    </location>
</feature>
<feature type="region of interest" description="Disordered" evidence="4">
    <location>
        <begin position="63"/>
        <end position="122"/>
    </location>
</feature>
<feature type="region of interest" description="Disordered" evidence="4">
    <location>
        <begin position="311"/>
        <end position="336"/>
    </location>
</feature>
<feature type="region of interest" description="Disordered" evidence="4">
    <location>
        <begin position="397"/>
        <end position="467"/>
    </location>
</feature>
<feature type="compositionally biased region" description="Basic and acidic residues" evidence="4">
    <location>
        <begin position="113"/>
        <end position="122"/>
    </location>
</feature>
<feature type="compositionally biased region" description="Polar residues" evidence="4">
    <location>
        <begin position="416"/>
        <end position="442"/>
    </location>
</feature>
<feature type="modified residue" description="Phosphoserine" evidence="1">
    <location>
        <position position="337"/>
    </location>
</feature>
<feature type="modified residue" description="Phosphoserine" evidence="1">
    <location>
        <position position="341"/>
    </location>
</feature>
<feature type="glycosylation site" description="N-linked (GlcNAc...) asparagine" evidence="3">
    <location>
        <position position="112"/>
    </location>
</feature>
<feature type="splice variant" id="VSP_061480" description="In isoform 2.">
    <original>K</original>
    <variation>KLSEFPPASQADGRTACPTITNDPDCQSLCFEVYPETARHGSCITNVNGEPLKEKTQNSCMEE</variation>
    <location>
        <position position="311"/>
    </location>
</feature>
<feature type="splice variant" id="VSP_061481" description="In isoform 2, isoform 3 and isoform 4.">
    <location>
        <begin position="360"/>
        <end position="376"/>
    </location>
</feature>
<feature type="splice variant" id="VSP_061482" description="In isoform 4 and isoform 5.">
    <original>KATET</original>
    <variation>T</variation>
    <location>
        <begin position="451"/>
        <end position="455"/>
    </location>
</feature>
<evidence type="ECO:0000250" key="1">
    <source>
        <dbReference type="UniProtKB" id="O54701"/>
    </source>
</evidence>
<evidence type="ECO:0000250" key="2">
    <source>
        <dbReference type="UniProtKB" id="Q9UI40"/>
    </source>
</evidence>
<evidence type="ECO:0000255" key="3"/>
<evidence type="ECO:0000256" key="4">
    <source>
        <dbReference type="SAM" id="MobiDB-lite"/>
    </source>
</evidence>
<evidence type="ECO:0000269" key="5">
    <source>
    </source>
</evidence>
<evidence type="ECO:0000305" key="6"/>
<evidence type="ECO:0000312" key="7">
    <source>
        <dbReference type="MGI" id="MGI:1923626"/>
    </source>
</evidence>
<proteinExistence type="evidence at protein level"/>